<name>FMT_CORDI</name>
<proteinExistence type="inferred from homology"/>
<accession>Q6NH23</accession>
<protein>
    <recommendedName>
        <fullName evidence="1">Methionyl-tRNA formyltransferase</fullName>
        <ecNumber evidence="1">2.1.2.9</ecNumber>
    </recommendedName>
</protein>
<sequence>MRLIFAGTPEPAVVVLSRLLESEHEVVAVLTRPDARRGRGRTLHPSPVSELAQQHGIEVLTPATIKPNTPDGDAFRARLTELAPDCVPVVAYGNLITEDLLQAVPHGWINLHFSLLPRWRGAAPVQAAIAAGDTSTGATTFRIDKGLDTGQILGVIHEPIQSTDTADDLLTRLAYSGADLLVNTMDNLAQGIATYSEQIGTATYAPKITTEDARIQWTHPAEAVDKHIRAVTPGPGAWSLLGDQRFKIGPVSVAEESDLQPGHMRIEKNRVLVGTGDLNIELDQIQPQGKKRMKASDWARGLQNTEGLVLS</sequence>
<gene>
    <name evidence="1" type="primary">fmt</name>
    <name type="ordered locus">DIP1322</name>
</gene>
<feature type="chain" id="PRO_0000082952" description="Methionyl-tRNA formyltransferase">
    <location>
        <begin position="1"/>
        <end position="311"/>
    </location>
</feature>
<feature type="binding site" evidence="1">
    <location>
        <begin position="114"/>
        <end position="117"/>
    </location>
    <ligand>
        <name>(6S)-5,6,7,8-tetrahydrofolate</name>
        <dbReference type="ChEBI" id="CHEBI:57453"/>
    </ligand>
</feature>
<reference key="1">
    <citation type="journal article" date="2003" name="Nucleic Acids Res.">
        <title>The complete genome sequence and analysis of Corynebacterium diphtheriae NCTC13129.</title>
        <authorList>
            <person name="Cerdeno-Tarraga A.-M."/>
            <person name="Efstratiou A."/>
            <person name="Dover L.G."/>
            <person name="Holden M.T.G."/>
            <person name="Pallen M.J."/>
            <person name="Bentley S.D."/>
            <person name="Besra G.S."/>
            <person name="Churcher C.M."/>
            <person name="James K.D."/>
            <person name="De Zoysa A."/>
            <person name="Chillingworth T."/>
            <person name="Cronin A."/>
            <person name="Dowd L."/>
            <person name="Feltwell T."/>
            <person name="Hamlin N."/>
            <person name="Holroyd S."/>
            <person name="Jagels K."/>
            <person name="Moule S."/>
            <person name="Quail M.A."/>
            <person name="Rabbinowitsch E."/>
            <person name="Rutherford K.M."/>
            <person name="Thomson N.R."/>
            <person name="Unwin L."/>
            <person name="Whitehead S."/>
            <person name="Barrell B.G."/>
            <person name="Parkhill J."/>
        </authorList>
    </citation>
    <scope>NUCLEOTIDE SEQUENCE [LARGE SCALE GENOMIC DNA]</scope>
    <source>
        <strain>ATCC 700971 / NCTC 13129 / Biotype gravis</strain>
    </source>
</reference>
<comment type="function">
    <text evidence="1">Attaches a formyl group to the free amino group of methionyl-tRNA(fMet). The formyl group appears to play a dual role in the initiator identity of N-formylmethionyl-tRNA by promoting its recognition by IF2 and preventing the misappropriation of this tRNA by the elongation apparatus.</text>
</comment>
<comment type="catalytic activity">
    <reaction evidence="1">
        <text>L-methionyl-tRNA(fMet) + (6R)-10-formyltetrahydrofolate = N-formyl-L-methionyl-tRNA(fMet) + (6S)-5,6,7,8-tetrahydrofolate + H(+)</text>
        <dbReference type="Rhea" id="RHEA:24380"/>
        <dbReference type="Rhea" id="RHEA-COMP:9952"/>
        <dbReference type="Rhea" id="RHEA-COMP:9953"/>
        <dbReference type="ChEBI" id="CHEBI:15378"/>
        <dbReference type="ChEBI" id="CHEBI:57453"/>
        <dbReference type="ChEBI" id="CHEBI:78530"/>
        <dbReference type="ChEBI" id="CHEBI:78844"/>
        <dbReference type="ChEBI" id="CHEBI:195366"/>
        <dbReference type="EC" id="2.1.2.9"/>
    </reaction>
</comment>
<comment type="similarity">
    <text evidence="1">Belongs to the Fmt family.</text>
</comment>
<evidence type="ECO:0000255" key="1">
    <source>
        <dbReference type="HAMAP-Rule" id="MF_00182"/>
    </source>
</evidence>
<dbReference type="EC" id="2.1.2.9" evidence="1"/>
<dbReference type="EMBL" id="BX248357">
    <property type="protein sequence ID" value="CAE49850.1"/>
    <property type="molecule type" value="Genomic_DNA"/>
</dbReference>
<dbReference type="RefSeq" id="WP_010934981.1">
    <property type="nucleotide sequence ID" value="NC_002935.2"/>
</dbReference>
<dbReference type="SMR" id="Q6NH23"/>
<dbReference type="STRING" id="257309.DIP1322"/>
<dbReference type="KEGG" id="cdi:DIP1322"/>
<dbReference type="HOGENOM" id="CLU_033347_1_0_11"/>
<dbReference type="Proteomes" id="UP000002198">
    <property type="component" value="Chromosome"/>
</dbReference>
<dbReference type="GO" id="GO:0005829">
    <property type="term" value="C:cytosol"/>
    <property type="evidence" value="ECO:0007669"/>
    <property type="project" value="TreeGrafter"/>
</dbReference>
<dbReference type="GO" id="GO:0004479">
    <property type="term" value="F:methionyl-tRNA formyltransferase activity"/>
    <property type="evidence" value="ECO:0007669"/>
    <property type="project" value="UniProtKB-UniRule"/>
</dbReference>
<dbReference type="CDD" id="cd08646">
    <property type="entry name" value="FMT_core_Met-tRNA-FMT_N"/>
    <property type="match status" value="1"/>
</dbReference>
<dbReference type="CDD" id="cd08704">
    <property type="entry name" value="Met_tRNA_FMT_C"/>
    <property type="match status" value="1"/>
</dbReference>
<dbReference type="FunFam" id="3.40.50.12230:FF:000001">
    <property type="entry name" value="Methionyl-tRNA formyltransferase"/>
    <property type="match status" value="1"/>
</dbReference>
<dbReference type="Gene3D" id="3.40.50.12230">
    <property type="match status" value="1"/>
</dbReference>
<dbReference type="HAMAP" id="MF_00182">
    <property type="entry name" value="Formyl_trans"/>
    <property type="match status" value="1"/>
</dbReference>
<dbReference type="InterPro" id="IPR005794">
    <property type="entry name" value="Fmt"/>
</dbReference>
<dbReference type="InterPro" id="IPR005793">
    <property type="entry name" value="Formyl_trans_C"/>
</dbReference>
<dbReference type="InterPro" id="IPR002376">
    <property type="entry name" value="Formyl_transf_N"/>
</dbReference>
<dbReference type="InterPro" id="IPR036477">
    <property type="entry name" value="Formyl_transf_N_sf"/>
</dbReference>
<dbReference type="InterPro" id="IPR011034">
    <property type="entry name" value="Formyl_transferase-like_C_sf"/>
</dbReference>
<dbReference type="InterPro" id="IPR044135">
    <property type="entry name" value="Met-tRNA-FMT_C"/>
</dbReference>
<dbReference type="InterPro" id="IPR041711">
    <property type="entry name" value="Met-tRNA-FMT_N"/>
</dbReference>
<dbReference type="NCBIfam" id="TIGR00460">
    <property type="entry name" value="fmt"/>
    <property type="match status" value="1"/>
</dbReference>
<dbReference type="PANTHER" id="PTHR11138">
    <property type="entry name" value="METHIONYL-TRNA FORMYLTRANSFERASE"/>
    <property type="match status" value="1"/>
</dbReference>
<dbReference type="PANTHER" id="PTHR11138:SF5">
    <property type="entry name" value="METHIONYL-TRNA FORMYLTRANSFERASE, MITOCHONDRIAL"/>
    <property type="match status" value="1"/>
</dbReference>
<dbReference type="Pfam" id="PF02911">
    <property type="entry name" value="Formyl_trans_C"/>
    <property type="match status" value="1"/>
</dbReference>
<dbReference type="Pfam" id="PF00551">
    <property type="entry name" value="Formyl_trans_N"/>
    <property type="match status" value="1"/>
</dbReference>
<dbReference type="SUPFAM" id="SSF50486">
    <property type="entry name" value="FMT C-terminal domain-like"/>
    <property type="match status" value="1"/>
</dbReference>
<dbReference type="SUPFAM" id="SSF53328">
    <property type="entry name" value="Formyltransferase"/>
    <property type="match status" value="1"/>
</dbReference>
<keyword id="KW-0648">Protein biosynthesis</keyword>
<keyword id="KW-1185">Reference proteome</keyword>
<keyword id="KW-0808">Transferase</keyword>
<organism>
    <name type="scientific">Corynebacterium diphtheriae (strain ATCC 700971 / NCTC 13129 / Biotype gravis)</name>
    <dbReference type="NCBI Taxonomy" id="257309"/>
    <lineage>
        <taxon>Bacteria</taxon>
        <taxon>Bacillati</taxon>
        <taxon>Actinomycetota</taxon>
        <taxon>Actinomycetes</taxon>
        <taxon>Mycobacteriales</taxon>
        <taxon>Corynebacteriaceae</taxon>
        <taxon>Corynebacterium</taxon>
    </lineage>
</organism>